<sequence>MNASTARMLNKICTYLFLTLLSIVIIYPLLITASSAFRVGNSAAFQLDFSGSWTLDHFKRLFDETLYLNWYSNTLVIALSVMVLQVTIVTLAGYSYSRYRFAGRKKSLIFFLIIQMVPTMAALTAFYVLAMLIGALDQYWFLTAIYIGGGIPMNTWLMKGYFDTVPREIDEAARIDGAGHLRIFASIVLPLVKPMLAVQALWAFMAPFGDYLLTKFLLRSPERLTIAVGLQSFISNPQQQKVALFAAGAILAALPICVLFFFLQKNFVSGLTAGGTKG</sequence>
<feature type="chain" id="PRO_0000361679" description="Maltodextrin transport system permease protein MdxG">
    <location>
        <begin position="1"/>
        <end position="278"/>
    </location>
</feature>
<feature type="transmembrane region" description="Helical" evidence="1">
    <location>
        <begin position="12"/>
        <end position="32"/>
    </location>
</feature>
<feature type="transmembrane region" description="Helical" evidence="1">
    <location>
        <begin position="74"/>
        <end position="94"/>
    </location>
</feature>
<feature type="transmembrane region" description="Helical" evidence="1">
    <location>
        <begin position="108"/>
        <end position="128"/>
    </location>
</feature>
<feature type="transmembrane region" description="Helical" evidence="1">
    <location>
        <begin position="131"/>
        <end position="151"/>
    </location>
</feature>
<feature type="transmembrane region" description="Helical" evidence="1">
    <location>
        <begin position="183"/>
        <end position="203"/>
    </location>
</feature>
<feature type="transmembrane region" description="Helical" evidence="1">
    <location>
        <begin position="242"/>
        <end position="262"/>
    </location>
</feature>
<feature type="domain" description="ABC transmembrane type-1" evidence="1">
    <location>
        <begin position="71"/>
        <end position="263"/>
    </location>
</feature>
<name>MDXG_BACSU</name>
<reference key="1">
    <citation type="submission" date="1997-04" db="EMBL/GenBank/DDBJ databases">
        <authorList>
            <person name="Denizot F."/>
        </authorList>
    </citation>
    <scope>NUCLEOTIDE SEQUENCE [GENOMIC DNA]</scope>
</reference>
<reference key="2">
    <citation type="journal article" date="1997" name="Nature">
        <title>The complete genome sequence of the Gram-positive bacterium Bacillus subtilis.</title>
        <authorList>
            <person name="Kunst F."/>
            <person name="Ogasawara N."/>
            <person name="Moszer I."/>
            <person name="Albertini A.M."/>
            <person name="Alloni G."/>
            <person name="Azevedo V."/>
            <person name="Bertero M.G."/>
            <person name="Bessieres P."/>
            <person name="Bolotin A."/>
            <person name="Borchert S."/>
            <person name="Borriss R."/>
            <person name="Boursier L."/>
            <person name="Brans A."/>
            <person name="Braun M."/>
            <person name="Brignell S.C."/>
            <person name="Bron S."/>
            <person name="Brouillet S."/>
            <person name="Bruschi C.V."/>
            <person name="Caldwell B."/>
            <person name="Capuano V."/>
            <person name="Carter N.M."/>
            <person name="Choi S.-K."/>
            <person name="Codani J.-J."/>
            <person name="Connerton I.F."/>
            <person name="Cummings N.J."/>
            <person name="Daniel R.A."/>
            <person name="Denizot F."/>
            <person name="Devine K.M."/>
            <person name="Duesterhoeft A."/>
            <person name="Ehrlich S.D."/>
            <person name="Emmerson P.T."/>
            <person name="Entian K.-D."/>
            <person name="Errington J."/>
            <person name="Fabret C."/>
            <person name="Ferrari E."/>
            <person name="Foulger D."/>
            <person name="Fritz C."/>
            <person name="Fujita M."/>
            <person name="Fujita Y."/>
            <person name="Fuma S."/>
            <person name="Galizzi A."/>
            <person name="Galleron N."/>
            <person name="Ghim S.-Y."/>
            <person name="Glaser P."/>
            <person name="Goffeau A."/>
            <person name="Golightly E.J."/>
            <person name="Grandi G."/>
            <person name="Guiseppi G."/>
            <person name="Guy B.J."/>
            <person name="Haga K."/>
            <person name="Haiech J."/>
            <person name="Harwood C.R."/>
            <person name="Henaut A."/>
            <person name="Hilbert H."/>
            <person name="Holsappel S."/>
            <person name="Hosono S."/>
            <person name="Hullo M.-F."/>
            <person name="Itaya M."/>
            <person name="Jones L.-M."/>
            <person name="Joris B."/>
            <person name="Karamata D."/>
            <person name="Kasahara Y."/>
            <person name="Klaerr-Blanchard M."/>
            <person name="Klein C."/>
            <person name="Kobayashi Y."/>
            <person name="Koetter P."/>
            <person name="Koningstein G."/>
            <person name="Krogh S."/>
            <person name="Kumano M."/>
            <person name="Kurita K."/>
            <person name="Lapidus A."/>
            <person name="Lardinois S."/>
            <person name="Lauber J."/>
            <person name="Lazarevic V."/>
            <person name="Lee S.-M."/>
            <person name="Levine A."/>
            <person name="Liu H."/>
            <person name="Masuda S."/>
            <person name="Mauel C."/>
            <person name="Medigue C."/>
            <person name="Medina N."/>
            <person name="Mellado R.P."/>
            <person name="Mizuno M."/>
            <person name="Moestl D."/>
            <person name="Nakai S."/>
            <person name="Noback M."/>
            <person name="Noone D."/>
            <person name="O'Reilly M."/>
            <person name="Ogawa K."/>
            <person name="Ogiwara A."/>
            <person name="Oudega B."/>
            <person name="Park S.-H."/>
            <person name="Parro V."/>
            <person name="Pohl T.M."/>
            <person name="Portetelle D."/>
            <person name="Porwollik S."/>
            <person name="Prescott A.M."/>
            <person name="Presecan E."/>
            <person name="Pujic P."/>
            <person name="Purnelle B."/>
            <person name="Rapoport G."/>
            <person name="Rey M."/>
            <person name="Reynolds S."/>
            <person name="Rieger M."/>
            <person name="Rivolta C."/>
            <person name="Rocha E."/>
            <person name="Roche B."/>
            <person name="Rose M."/>
            <person name="Sadaie Y."/>
            <person name="Sato T."/>
            <person name="Scanlan E."/>
            <person name="Schleich S."/>
            <person name="Schroeter R."/>
            <person name="Scoffone F."/>
            <person name="Sekiguchi J."/>
            <person name="Sekowska A."/>
            <person name="Seror S.J."/>
            <person name="Serror P."/>
            <person name="Shin B.-S."/>
            <person name="Soldo B."/>
            <person name="Sorokin A."/>
            <person name="Tacconi E."/>
            <person name="Takagi T."/>
            <person name="Takahashi H."/>
            <person name="Takemaru K."/>
            <person name="Takeuchi M."/>
            <person name="Tamakoshi A."/>
            <person name="Tanaka T."/>
            <person name="Terpstra P."/>
            <person name="Tognoni A."/>
            <person name="Tosato V."/>
            <person name="Uchiyama S."/>
            <person name="Vandenbol M."/>
            <person name="Vannier F."/>
            <person name="Vassarotti A."/>
            <person name="Viari A."/>
            <person name="Wambutt R."/>
            <person name="Wedler E."/>
            <person name="Wedler H."/>
            <person name="Weitzenegger T."/>
            <person name="Winters P."/>
            <person name="Wipat A."/>
            <person name="Yamamoto H."/>
            <person name="Yamane K."/>
            <person name="Yasumoto K."/>
            <person name="Yata K."/>
            <person name="Yoshida K."/>
            <person name="Yoshikawa H.-F."/>
            <person name="Zumstein E."/>
            <person name="Yoshikawa H."/>
            <person name="Danchin A."/>
        </authorList>
    </citation>
    <scope>NUCLEOTIDE SEQUENCE [LARGE SCALE GENOMIC DNA]</scope>
    <source>
        <strain>168</strain>
    </source>
</reference>
<reference key="3">
    <citation type="journal article" date="2006" name="J. Bacteriol.">
        <title>Maltose and maltodextrin utilization by Bacillus subtilis.</title>
        <authorList>
            <person name="Schoenert S."/>
            <person name="Seitz S."/>
            <person name="Krafft H."/>
            <person name="Feuerbaum E.-A."/>
            <person name="Andernach I."/>
            <person name="Witz G."/>
            <person name="Dahl M.K."/>
        </authorList>
    </citation>
    <scope>FUNCTION</scope>
    <scope>NOMENCLATURE</scope>
    <source>
        <strain>168</strain>
    </source>
</reference>
<dbReference type="EMBL" id="Z94043">
    <property type="protein sequence ID" value="CAB08038.1"/>
    <property type="molecule type" value="Genomic_DNA"/>
</dbReference>
<dbReference type="EMBL" id="AL009126">
    <property type="protein sequence ID" value="CAB15464.1"/>
    <property type="molecule type" value="Genomic_DNA"/>
</dbReference>
<dbReference type="PIR" id="A70034">
    <property type="entry name" value="A70034"/>
</dbReference>
<dbReference type="RefSeq" id="NP_391339.1">
    <property type="nucleotide sequence ID" value="NC_000964.3"/>
</dbReference>
<dbReference type="RefSeq" id="WP_003242930.1">
    <property type="nucleotide sequence ID" value="NZ_OZ025638.1"/>
</dbReference>
<dbReference type="SMR" id="O06991"/>
<dbReference type="FunCoup" id="O06991">
    <property type="interactions" value="198"/>
</dbReference>
<dbReference type="STRING" id="224308.BSU34590"/>
<dbReference type="TCDB" id="3.A.1.1.26">
    <property type="family name" value="the atp-binding cassette (abc) superfamily"/>
</dbReference>
<dbReference type="PaxDb" id="224308-BSU34590"/>
<dbReference type="EnsemblBacteria" id="CAB15464">
    <property type="protein sequence ID" value="CAB15464"/>
    <property type="gene ID" value="BSU_34590"/>
</dbReference>
<dbReference type="GeneID" id="936499"/>
<dbReference type="KEGG" id="bsu:BSU34590"/>
<dbReference type="PATRIC" id="fig|224308.179.peg.3746"/>
<dbReference type="eggNOG" id="COG3833">
    <property type="taxonomic scope" value="Bacteria"/>
</dbReference>
<dbReference type="InParanoid" id="O06991"/>
<dbReference type="OrthoDB" id="9794684at2"/>
<dbReference type="PhylomeDB" id="O06991"/>
<dbReference type="BioCyc" id="BSUB:BSU34590-MONOMER"/>
<dbReference type="SABIO-RK" id="O06991"/>
<dbReference type="Proteomes" id="UP000001570">
    <property type="component" value="Chromosome"/>
</dbReference>
<dbReference type="GO" id="GO:0005886">
    <property type="term" value="C:plasma membrane"/>
    <property type="evidence" value="ECO:0007669"/>
    <property type="project" value="UniProtKB-SubCell"/>
</dbReference>
<dbReference type="GO" id="GO:0015423">
    <property type="term" value="F:ABC-type maltose transporter activity"/>
    <property type="evidence" value="ECO:0000318"/>
    <property type="project" value="GO_Central"/>
</dbReference>
<dbReference type="GO" id="GO:0042956">
    <property type="term" value="P:maltodextrin transmembrane transport"/>
    <property type="evidence" value="ECO:0000318"/>
    <property type="project" value="GO_Central"/>
</dbReference>
<dbReference type="GO" id="GO:0015768">
    <property type="term" value="P:maltose transport"/>
    <property type="evidence" value="ECO:0000318"/>
    <property type="project" value="GO_Central"/>
</dbReference>
<dbReference type="CDD" id="cd06261">
    <property type="entry name" value="TM_PBP2"/>
    <property type="match status" value="1"/>
</dbReference>
<dbReference type="FunFam" id="1.10.3720.10:FF:000034">
    <property type="entry name" value="Sugar ABC transporter permease"/>
    <property type="match status" value="1"/>
</dbReference>
<dbReference type="Gene3D" id="1.10.3720.10">
    <property type="entry name" value="MetI-like"/>
    <property type="match status" value="1"/>
</dbReference>
<dbReference type="InterPro" id="IPR050901">
    <property type="entry name" value="BP-dep_ABC_trans_perm"/>
</dbReference>
<dbReference type="InterPro" id="IPR000515">
    <property type="entry name" value="MetI-like"/>
</dbReference>
<dbReference type="InterPro" id="IPR035906">
    <property type="entry name" value="MetI-like_sf"/>
</dbReference>
<dbReference type="PANTHER" id="PTHR32243">
    <property type="entry name" value="MALTOSE TRANSPORT SYSTEM PERMEASE-RELATED"/>
    <property type="match status" value="1"/>
</dbReference>
<dbReference type="PANTHER" id="PTHR32243:SF50">
    <property type="entry name" value="MALTOSE_MALTODEXTRIN TRANSPORT SYSTEM PERMEASE PROTEIN MALG"/>
    <property type="match status" value="1"/>
</dbReference>
<dbReference type="Pfam" id="PF00528">
    <property type="entry name" value="BPD_transp_1"/>
    <property type="match status" value="1"/>
</dbReference>
<dbReference type="SUPFAM" id="SSF161098">
    <property type="entry name" value="MetI-like"/>
    <property type="match status" value="1"/>
</dbReference>
<dbReference type="PROSITE" id="PS50928">
    <property type="entry name" value="ABC_TM1"/>
    <property type="match status" value="1"/>
</dbReference>
<organism>
    <name type="scientific">Bacillus subtilis (strain 168)</name>
    <dbReference type="NCBI Taxonomy" id="224308"/>
    <lineage>
        <taxon>Bacteria</taxon>
        <taxon>Bacillati</taxon>
        <taxon>Bacillota</taxon>
        <taxon>Bacilli</taxon>
        <taxon>Bacillales</taxon>
        <taxon>Bacillaceae</taxon>
        <taxon>Bacillus</taxon>
    </lineage>
</organism>
<keyword id="KW-1003">Cell membrane</keyword>
<keyword id="KW-0472">Membrane</keyword>
<keyword id="KW-0625">Polysaccharide transport</keyword>
<keyword id="KW-1185">Reference proteome</keyword>
<keyword id="KW-0762">Sugar transport</keyword>
<keyword id="KW-0812">Transmembrane</keyword>
<keyword id="KW-1133">Transmembrane helix</keyword>
<keyword id="KW-0813">Transport</keyword>
<comment type="function">
    <text evidence="3">Part of the ABC transporter complex involved in maltodextrin import. Probably responsible for the translocation of the substrate across the membrane (Probable).</text>
</comment>
<comment type="subunit">
    <text evidence="2">The complex is composed of two ATP-binding proteins (MsmX), two transmembrane proteins (MdxF and MdxG) and a solute-binding protein (MdxE).</text>
</comment>
<comment type="subcellular location">
    <subcellularLocation>
        <location evidence="2">Cell membrane</location>
        <topology evidence="2">Multi-pass membrane protein</topology>
    </subcellularLocation>
</comment>
<comment type="similarity">
    <text evidence="2">Belongs to the binding-protein-dependent transport system permease family. MalFG subfamily.</text>
</comment>
<proteinExistence type="inferred from homology"/>
<evidence type="ECO:0000255" key="1">
    <source>
        <dbReference type="PROSITE-ProRule" id="PRU00441"/>
    </source>
</evidence>
<evidence type="ECO:0000305" key="2"/>
<evidence type="ECO:0000305" key="3">
    <source>
    </source>
</evidence>
<accession>O06991</accession>
<accession>Q795H0</accession>
<gene>
    <name type="primary">mdxG</name>
    <name type="synonym">yvdI</name>
    <name type="ordered locus">BSU34590</name>
</gene>
<protein>
    <recommendedName>
        <fullName>Maltodextrin transport system permease protein MdxG</fullName>
    </recommendedName>
</protein>